<reference evidence="7" key="1">
    <citation type="journal article" date="1998" name="Science">
        <title>Genome sequence of the nematode C. elegans: a platform for investigating biology.</title>
        <authorList>
            <consortium name="The C. elegans sequencing consortium"/>
        </authorList>
    </citation>
    <scope>NUCLEOTIDE SEQUENCE [LARGE SCALE GENOMIC DNA]</scope>
    <source>
        <strain evidence="7">Bristol N2</strain>
    </source>
</reference>
<reference evidence="6" key="2">
    <citation type="journal article" date="2005" name="Development">
        <title>Essential kinase-independent role of a Fer-like non-receptor tyrosine kinase in Caenorhabditis elegans morphogenesis.</title>
        <authorList>
            <person name="Putzke A.P."/>
            <person name="Hikita S.T."/>
            <person name="Clegg D.O."/>
            <person name="Rothman J.H."/>
        </authorList>
    </citation>
    <scope>FUNCTION</scope>
    <scope>CATALYTIC ACTIVITY</scope>
    <scope>COFACTOR</scope>
    <scope>INTERACTION WITH HMP-2</scope>
    <scope>SUBCELLULAR LOCATION</scope>
    <scope>DEVELOPMENTAL STAGE</scope>
    <scope>DISRUPTION PHENOTYPE</scope>
    <scope>MUTAGENESIS OF ASP-308</scope>
</reference>
<reference evidence="6" key="3">
    <citation type="journal article" date="2010" name="Proc. Natl. Acad. Sci. U.S.A.">
        <title>Repression of Wnt signaling by a Fer-type nonreceptor tyrosine kinase.</title>
        <authorList>
            <person name="Putzke A.P."/>
            <person name="Rothman J.H."/>
        </authorList>
    </citation>
    <scope>FUNCTION</scope>
    <scope>DISRUPTION PHENOTYPE</scope>
</reference>
<feature type="chain" id="PRO_0000433994" description="Fer-related kinase 1" evidence="6">
    <location>
        <begin position="1"/>
        <end position="390"/>
    </location>
</feature>
<feature type="domain" description="SH2" evidence="2">
    <location>
        <begin position="23"/>
        <end position="119"/>
    </location>
</feature>
<feature type="domain" description="Protein kinase" evidence="1">
    <location>
        <begin position="131"/>
        <end position="386"/>
    </location>
</feature>
<feature type="active site" description="Proton acceptor" evidence="1">
    <location>
        <position position="252"/>
    </location>
</feature>
<feature type="binding site" evidence="1">
    <location>
        <begin position="137"/>
        <end position="145"/>
    </location>
    <ligand>
        <name>ATP</name>
        <dbReference type="ChEBI" id="CHEBI:30616"/>
    </ligand>
</feature>
<feature type="binding site" evidence="1">
    <location>
        <position position="161"/>
    </location>
    <ligand>
        <name>ATP</name>
        <dbReference type="ChEBI" id="CHEBI:30616"/>
    </ligand>
</feature>
<feature type="mutagenesis site" description="Loss of kinase activity. No defect in embryo enclosure and elongation." evidence="3">
    <original>D</original>
    <variation>R</variation>
    <location>
        <position position="308"/>
    </location>
</feature>
<sequence>MGTVEKSSNNDASVTDDIRSAEYYHGMVPRQDAEGFLKREGDFLVRKTEQMPGKVVLAMSVRVTDELCRHFMLNMDPTSNKFYFEHTHQESTISELINWHMTTKTPISAASGAKIRRPMERSPWLINHDSIVANKKLGEGAFGDVFIAELDQGGKQEVAVKTMRAEATREARLRFMKEARLMRKYQHKHVVKLIGVAIHEHPLMIVMEYCPNGSLLSHLKKNKVSLIEKLRFTTEAADGIAYLERSKCIHRDIAARNCLLSAKNELKISDFGMSDNKDEIKDETLEKVPIKWLAPETMQEKVYTHKTDIWTFGVLVWEIYSDGAEPYPGLTKIQTRAKIVVNDYRMKMPDGTHPTVADVVTGTCWQKNPEKRSTMDSIHKKLREFYESKK</sequence>
<dbReference type="EC" id="2.7.10.2" evidence="3"/>
<dbReference type="EMBL" id="BX284604">
    <property type="protein sequence ID" value="CAA92609.1"/>
    <property type="molecule type" value="Genomic_DNA"/>
</dbReference>
<dbReference type="PIR" id="T24437">
    <property type="entry name" value="T24437"/>
</dbReference>
<dbReference type="RefSeq" id="NP_001255459.1">
    <property type="nucleotide sequence ID" value="NM_001268530.1"/>
</dbReference>
<dbReference type="RefSeq" id="NP_001369901.1">
    <property type="nucleotide sequence ID" value="NM_001383177.1"/>
</dbReference>
<dbReference type="SMR" id="Q22146"/>
<dbReference type="FunCoup" id="Q22146">
    <property type="interactions" value="20"/>
</dbReference>
<dbReference type="STRING" id="6239.T04B2.2a.1"/>
<dbReference type="PaxDb" id="6239-T04B2.2b"/>
<dbReference type="PeptideAtlas" id="Q22146"/>
<dbReference type="EnsemblMetazoa" id="T04B2.2a.1">
    <property type="protein sequence ID" value="T04B2.2a.1"/>
    <property type="gene ID" value="WBGene00001487"/>
</dbReference>
<dbReference type="EnsemblMetazoa" id="T04B2.2a.2">
    <property type="protein sequence ID" value="T04B2.2a.2"/>
    <property type="gene ID" value="WBGene00001487"/>
</dbReference>
<dbReference type="GeneID" id="191635"/>
<dbReference type="AGR" id="WB:WBGene00001487"/>
<dbReference type="WormBase" id="T04B2.2a">
    <property type="protein sequence ID" value="CE03609"/>
    <property type="gene ID" value="WBGene00001487"/>
    <property type="gene designation" value="frk-1"/>
</dbReference>
<dbReference type="eggNOG" id="KOG0194">
    <property type="taxonomic scope" value="Eukaryota"/>
</dbReference>
<dbReference type="GeneTree" id="ENSGT00970000196256"/>
<dbReference type="HOGENOM" id="CLU_000288_7_2_1"/>
<dbReference type="InParanoid" id="Q22146"/>
<dbReference type="OMA" id="YLERSKC"/>
<dbReference type="OrthoDB" id="535945at2759"/>
<dbReference type="PhylomeDB" id="Q22146"/>
<dbReference type="Reactome" id="R-CEL-399954">
    <property type="pathway name" value="Sema3A PAK dependent Axon repulsion"/>
</dbReference>
<dbReference type="Reactome" id="R-CEL-399956">
    <property type="pathway name" value="CRMPs in Sema3A signaling"/>
</dbReference>
<dbReference type="PRO" id="PR:Q22146"/>
<dbReference type="Proteomes" id="UP000001940">
    <property type="component" value="Chromosome IV"/>
</dbReference>
<dbReference type="Bgee" id="WBGene00001487">
    <property type="expression patterns" value="Expressed in adult organism and 1 other cell type or tissue"/>
</dbReference>
<dbReference type="GO" id="GO:0005911">
    <property type="term" value="C:cell-cell junction"/>
    <property type="evidence" value="ECO:0000314"/>
    <property type="project" value="WormBase"/>
</dbReference>
<dbReference type="GO" id="GO:0005737">
    <property type="term" value="C:cytoplasm"/>
    <property type="evidence" value="ECO:0000314"/>
    <property type="project" value="WormBase"/>
</dbReference>
<dbReference type="GO" id="GO:0005634">
    <property type="term" value="C:nucleus"/>
    <property type="evidence" value="ECO:0000314"/>
    <property type="project" value="WormBase"/>
</dbReference>
<dbReference type="GO" id="GO:0005886">
    <property type="term" value="C:plasma membrane"/>
    <property type="evidence" value="ECO:0000314"/>
    <property type="project" value="WormBase"/>
</dbReference>
<dbReference type="GO" id="GO:0005524">
    <property type="term" value="F:ATP binding"/>
    <property type="evidence" value="ECO:0007669"/>
    <property type="project" value="UniProtKB-KW"/>
</dbReference>
<dbReference type="GO" id="GO:0008013">
    <property type="term" value="F:beta-catenin binding"/>
    <property type="evidence" value="ECO:0000353"/>
    <property type="project" value="WormBase"/>
</dbReference>
<dbReference type="GO" id="GO:0046872">
    <property type="term" value="F:metal ion binding"/>
    <property type="evidence" value="ECO:0007669"/>
    <property type="project" value="UniProtKB-KW"/>
</dbReference>
<dbReference type="GO" id="GO:0004715">
    <property type="term" value="F:non-membrane spanning protein tyrosine kinase activity"/>
    <property type="evidence" value="ECO:0000318"/>
    <property type="project" value="GO_Central"/>
</dbReference>
<dbReference type="GO" id="GO:0004672">
    <property type="term" value="F:protein kinase activity"/>
    <property type="evidence" value="ECO:0000314"/>
    <property type="project" value="WormBase"/>
</dbReference>
<dbReference type="GO" id="GO:0005102">
    <property type="term" value="F:signaling receptor binding"/>
    <property type="evidence" value="ECO:0000318"/>
    <property type="project" value="GO_Central"/>
</dbReference>
<dbReference type="GO" id="GO:0060070">
    <property type="term" value="P:canonical Wnt signaling pathway"/>
    <property type="evidence" value="ECO:0000316"/>
    <property type="project" value="UniProtKB"/>
</dbReference>
<dbReference type="GO" id="GO:0030154">
    <property type="term" value="P:cell differentiation"/>
    <property type="evidence" value="ECO:0000318"/>
    <property type="project" value="GO_Central"/>
</dbReference>
<dbReference type="GO" id="GO:0007169">
    <property type="term" value="P:cell surface receptor protein tyrosine kinase signaling pathway"/>
    <property type="evidence" value="ECO:0000318"/>
    <property type="project" value="GO_Central"/>
</dbReference>
<dbReference type="GO" id="GO:0098609">
    <property type="term" value="P:cell-cell adhesion"/>
    <property type="evidence" value="ECO:0000315"/>
    <property type="project" value="WormBase"/>
</dbReference>
<dbReference type="GO" id="GO:0010172">
    <property type="term" value="P:embryonic body morphogenesis"/>
    <property type="evidence" value="ECO:0000315"/>
    <property type="project" value="WormBase"/>
</dbReference>
<dbReference type="GO" id="GO:0090090">
    <property type="term" value="P:negative regulation of canonical Wnt signaling pathway"/>
    <property type="evidence" value="ECO:0000315"/>
    <property type="project" value="UniProtKB"/>
</dbReference>
<dbReference type="GO" id="GO:0051782">
    <property type="term" value="P:negative regulation of cell division"/>
    <property type="evidence" value="ECO:0000315"/>
    <property type="project" value="UniProtKB"/>
</dbReference>
<dbReference type="GO" id="GO:0008284">
    <property type="term" value="P:positive regulation of cell population proliferation"/>
    <property type="evidence" value="ECO:0000315"/>
    <property type="project" value="WormBase"/>
</dbReference>
<dbReference type="GO" id="GO:0045604">
    <property type="term" value="P:regulation of epidermal cell differentiation"/>
    <property type="evidence" value="ECO:0000315"/>
    <property type="project" value="WormBase"/>
</dbReference>
<dbReference type="GO" id="GO:0032880">
    <property type="term" value="P:regulation of protein localization"/>
    <property type="evidence" value="ECO:0000315"/>
    <property type="project" value="WormBase"/>
</dbReference>
<dbReference type="CDD" id="cd00192">
    <property type="entry name" value="PTKc"/>
    <property type="match status" value="1"/>
</dbReference>
<dbReference type="CDD" id="cd10361">
    <property type="entry name" value="SH2_Fps_family"/>
    <property type="match status" value="1"/>
</dbReference>
<dbReference type="FunFam" id="3.30.200.20:FF:000194">
    <property type="entry name" value="protein-tyrosine kinase 2-beta isoform X1"/>
    <property type="match status" value="1"/>
</dbReference>
<dbReference type="FunFam" id="1.10.510.10:FF:000937">
    <property type="entry name" value="Tyrosine-protein kinase"/>
    <property type="match status" value="1"/>
</dbReference>
<dbReference type="FunFam" id="3.30.505.10:FF:000101">
    <property type="entry name" value="Tyrosine-protein kinase"/>
    <property type="match status" value="1"/>
</dbReference>
<dbReference type="Gene3D" id="3.30.200.20">
    <property type="entry name" value="Phosphorylase Kinase, domain 1"/>
    <property type="match status" value="1"/>
</dbReference>
<dbReference type="Gene3D" id="3.30.505.10">
    <property type="entry name" value="SH2 domain"/>
    <property type="match status" value="1"/>
</dbReference>
<dbReference type="Gene3D" id="1.10.510.10">
    <property type="entry name" value="Transferase(Phosphotransferase) domain 1"/>
    <property type="match status" value="1"/>
</dbReference>
<dbReference type="InterPro" id="IPR035849">
    <property type="entry name" value="Fes/Fps/Fer_SH2"/>
</dbReference>
<dbReference type="InterPro" id="IPR011009">
    <property type="entry name" value="Kinase-like_dom_sf"/>
</dbReference>
<dbReference type="InterPro" id="IPR050198">
    <property type="entry name" value="Non-receptor_tyrosine_kinases"/>
</dbReference>
<dbReference type="InterPro" id="IPR000719">
    <property type="entry name" value="Prot_kinase_dom"/>
</dbReference>
<dbReference type="InterPro" id="IPR017441">
    <property type="entry name" value="Protein_kinase_ATP_BS"/>
</dbReference>
<dbReference type="InterPro" id="IPR001245">
    <property type="entry name" value="Ser-Thr/Tyr_kinase_cat_dom"/>
</dbReference>
<dbReference type="InterPro" id="IPR000980">
    <property type="entry name" value="SH2"/>
</dbReference>
<dbReference type="InterPro" id="IPR036860">
    <property type="entry name" value="SH2_dom_sf"/>
</dbReference>
<dbReference type="InterPro" id="IPR008266">
    <property type="entry name" value="Tyr_kinase_AS"/>
</dbReference>
<dbReference type="InterPro" id="IPR020635">
    <property type="entry name" value="Tyr_kinase_cat_dom"/>
</dbReference>
<dbReference type="PANTHER" id="PTHR24418">
    <property type="entry name" value="TYROSINE-PROTEIN KINASE"/>
    <property type="match status" value="1"/>
</dbReference>
<dbReference type="Pfam" id="PF07714">
    <property type="entry name" value="PK_Tyr_Ser-Thr"/>
    <property type="match status" value="1"/>
</dbReference>
<dbReference type="Pfam" id="PF00017">
    <property type="entry name" value="SH2"/>
    <property type="match status" value="1"/>
</dbReference>
<dbReference type="PRINTS" id="PR00109">
    <property type="entry name" value="TYRKINASE"/>
</dbReference>
<dbReference type="SMART" id="SM00252">
    <property type="entry name" value="SH2"/>
    <property type="match status" value="1"/>
</dbReference>
<dbReference type="SMART" id="SM00219">
    <property type="entry name" value="TyrKc"/>
    <property type="match status" value="1"/>
</dbReference>
<dbReference type="SUPFAM" id="SSF56112">
    <property type="entry name" value="Protein kinase-like (PK-like)"/>
    <property type="match status" value="1"/>
</dbReference>
<dbReference type="SUPFAM" id="SSF55550">
    <property type="entry name" value="SH2 domain"/>
    <property type="match status" value="1"/>
</dbReference>
<dbReference type="PROSITE" id="PS00107">
    <property type="entry name" value="PROTEIN_KINASE_ATP"/>
    <property type="match status" value="1"/>
</dbReference>
<dbReference type="PROSITE" id="PS50011">
    <property type="entry name" value="PROTEIN_KINASE_DOM"/>
    <property type="match status" value="1"/>
</dbReference>
<dbReference type="PROSITE" id="PS00109">
    <property type="entry name" value="PROTEIN_KINASE_TYR"/>
    <property type="match status" value="1"/>
</dbReference>
<dbReference type="PROSITE" id="PS50001">
    <property type="entry name" value="SH2"/>
    <property type="match status" value="1"/>
</dbReference>
<proteinExistence type="evidence at protein level"/>
<name>FRK1_CAEEL</name>
<comment type="function">
    <text evidence="3 4">Non-receptor tyrosine-protein kinase which plays a role in morphogenesis by regulating the epidermal enclosure of the embryo, independently of its kinase activity (PubMed:15958510). Prevents hyperactivation of the Wnt signaling pathway during endoderm development, probably by preventing hmp-2 nuclear translocation (PubMed:20805471).</text>
</comment>
<comment type="catalytic activity">
    <reaction evidence="3">
        <text>L-tyrosyl-[protein] + ATP = O-phospho-L-tyrosyl-[protein] + ADP + H(+)</text>
        <dbReference type="Rhea" id="RHEA:10596"/>
        <dbReference type="Rhea" id="RHEA-COMP:10136"/>
        <dbReference type="Rhea" id="RHEA-COMP:20101"/>
        <dbReference type="ChEBI" id="CHEBI:15378"/>
        <dbReference type="ChEBI" id="CHEBI:30616"/>
        <dbReference type="ChEBI" id="CHEBI:46858"/>
        <dbReference type="ChEBI" id="CHEBI:61978"/>
        <dbReference type="ChEBI" id="CHEBI:456216"/>
        <dbReference type="EC" id="2.7.10.2"/>
    </reaction>
</comment>
<comment type="cofactor">
    <cofactor evidence="3">
        <name>Mn(2+)</name>
        <dbReference type="ChEBI" id="CHEBI:29035"/>
    </cofactor>
</comment>
<comment type="subunit">
    <text evidence="3">Interacts with hmp-2.</text>
</comment>
<comment type="subcellular location">
    <subcellularLocation>
        <location evidence="3">Nucleus</location>
    </subcellularLocation>
    <subcellularLocation>
        <location evidence="3">Cytoplasm</location>
    </subcellularLocation>
    <subcellularLocation>
        <location evidence="3">Cell junction</location>
    </subcellularLocation>
    <subcellularLocation>
        <location evidence="3">Cell membrane</location>
        <topology evidence="3">Peripheral membrane protein</topology>
    </subcellularLocation>
    <text evidence="3">Localizes to the nucleus during cell division in the early embryo and in seam cells and in the developing germline at the larval stage. Localizes in the cytoplasm and at the cell-cell contacts during embryo enclosure and elongation. Nuclear exclusion during elongation is regulated by integrin alpha subunit pat-3 and beta-catenin hmp-2.</text>
</comment>
<comment type="developmental stage">
    <text evidence="3">Expressed in early embryo and, during later stages of embryogenesis, in epithelial cells, body wall muscle, germline and mature sperm.</text>
</comment>
<comment type="disruption phenotype">
    <text evidence="3 4">RNAi-mediated knockdown causes a disruption in the dorsal intercalation and ventral migration of epidermal cells, preventing enclosure and elongation of the embryo. Epidermal cells tend to round up and appear to be defective in adhesion (PubMed:15958510). In addition, causes partial nuclear re-localization of hmp-2 in the embryonic epidermis and the production of supernumerary gut nuclei probably resulting from epithelial cell hyperproliferation (PubMed:20805471).</text>
</comment>
<comment type="similarity">
    <text evidence="6">Belongs to the protein kinase superfamily. Tyr protein kinase family. Fes/fps subfamily.</text>
</comment>
<protein>
    <recommendedName>
        <fullName evidence="5">Fer-related kinase 1</fullName>
        <ecNumber evidence="3">2.7.10.2</ecNumber>
    </recommendedName>
    <alternativeName>
        <fullName evidence="8">Fer oncogene-related kinase 1</fullName>
    </alternativeName>
</protein>
<gene>
    <name evidence="8" type="primary">frk-1</name>
    <name evidence="8" type="ORF">T04B2.2</name>
</gene>
<evidence type="ECO:0000255" key="1">
    <source>
        <dbReference type="PROSITE-ProRule" id="PRU00159"/>
    </source>
</evidence>
<evidence type="ECO:0000255" key="2">
    <source>
        <dbReference type="PROSITE-ProRule" id="PRU00191"/>
    </source>
</evidence>
<evidence type="ECO:0000269" key="3">
    <source>
    </source>
</evidence>
<evidence type="ECO:0000269" key="4">
    <source>
    </source>
</evidence>
<evidence type="ECO:0000303" key="5">
    <source>
    </source>
</evidence>
<evidence type="ECO:0000305" key="6"/>
<evidence type="ECO:0000312" key="7">
    <source>
        <dbReference type="Proteomes" id="UP000001940"/>
    </source>
</evidence>
<evidence type="ECO:0000312" key="8">
    <source>
        <dbReference type="WormBase" id="T04B2.2a"/>
    </source>
</evidence>
<accession>Q22146</accession>
<keyword id="KW-0067">ATP-binding</keyword>
<keyword id="KW-0965">Cell junction</keyword>
<keyword id="KW-1003">Cell membrane</keyword>
<keyword id="KW-0963">Cytoplasm</keyword>
<keyword id="KW-0418">Kinase</keyword>
<keyword id="KW-0464">Manganese</keyword>
<keyword id="KW-0472">Membrane</keyword>
<keyword id="KW-0479">Metal-binding</keyword>
<keyword id="KW-0547">Nucleotide-binding</keyword>
<keyword id="KW-0539">Nucleus</keyword>
<keyword id="KW-1185">Reference proteome</keyword>
<keyword id="KW-0727">SH2 domain</keyword>
<keyword id="KW-0808">Transferase</keyword>
<keyword id="KW-0829">Tyrosine-protein kinase</keyword>
<organism evidence="7">
    <name type="scientific">Caenorhabditis elegans</name>
    <dbReference type="NCBI Taxonomy" id="6239"/>
    <lineage>
        <taxon>Eukaryota</taxon>
        <taxon>Metazoa</taxon>
        <taxon>Ecdysozoa</taxon>
        <taxon>Nematoda</taxon>
        <taxon>Chromadorea</taxon>
        <taxon>Rhabditida</taxon>
        <taxon>Rhabditina</taxon>
        <taxon>Rhabditomorpha</taxon>
        <taxon>Rhabditoidea</taxon>
        <taxon>Rhabditidae</taxon>
        <taxon>Peloderinae</taxon>
        <taxon>Caenorhabditis</taxon>
    </lineage>
</organism>